<organism>
    <name type="scientific">Arabidopsis thaliana</name>
    <name type="common">Mouse-ear cress</name>
    <dbReference type="NCBI Taxonomy" id="3702"/>
    <lineage>
        <taxon>Eukaryota</taxon>
        <taxon>Viridiplantae</taxon>
        <taxon>Streptophyta</taxon>
        <taxon>Embryophyta</taxon>
        <taxon>Tracheophyta</taxon>
        <taxon>Spermatophyta</taxon>
        <taxon>Magnoliopsida</taxon>
        <taxon>eudicotyledons</taxon>
        <taxon>Gunneridae</taxon>
        <taxon>Pentapetalae</taxon>
        <taxon>rosids</taxon>
        <taxon>malvids</taxon>
        <taxon>Brassicales</taxon>
        <taxon>Brassicaceae</taxon>
        <taxon>Camelineae</taxon>
        <taxon>Arabidopsis</taxon>
    </lineage>
</organism>
<protein>
    <recommendedName>
        <fullName>Protein disulfide-isomerase like 2-2</fullName>
        <shortName>AtPDIL2-2</shortName>
        <ecNumber>5.3.4.1</ecNumber>
    </recommendedName>
    <alternativeName>
        <fullName>Protein disulfide-isomerase 10</fullName>
        <shortName>PDI10</shortName>
    </alternativeName>
    <alternativeName>
        <fullName>Protein disulfide-isomerase like 5-1</fullName>
        <shortName>AtPDIL5-1</shortName>
    </alternativeName>
</protein>
<name>PDI22_ARATH</name>
<proteinExistence type="evidence at transcript level"/>
<dbReference type="EC" id="5.3.4.1"/>
<dbReference type="EMBL" id="AC004809">
    <property type="protein sequence ID" value="AAF40463.1"/>
    <property type="status" value="ALT_INIT"/>
    <property type="molecule type" value="Genomic_DNA"/>
</dbReference>
<dbReference type="EMBL" id="CP002684">
    <property type="protein sequence ID" value="AEE27773.1"/>
    <property type="molecule type" value="Genomic_DNA"/>
</dbReference>
<dbReference type="EMBL" id="AY099813">
    <property type="protein sequence ID" value="AAM20664.1"/>
    <property type="molecule type" value="mRNA"/>
</dbReference>
<dbReference type="PIR" id="D86183">
    <property type="entry name" value="D86183"/>
</dbReference>
<dbReference type="RefSeq" id="NP_171990.3">
    <property type="nucleotide sequence ID" value="NM_100376.5"/>
</dbReference>
<dbReference type="SMR" id="Q9MAU6"/>
<dbReference type="FunCoup" id="Q9MAU6">
    <property type="interactions" value="2397"/>
</dbReference>
<dbReference type="IntAct" id="Q9MAU6">
    <property type="interactions" value="1"/>
</dbReference>
<dbReference type="STRING" id="3702.Q9MAU6"/>
<dbReference type="GlyCosmos" id="Q9MAU6">
    <property type="glycosylation" value="1 site, No reported glycans"/>
</dbReference>
<dbReference type="GlyGen" id="Q9MAU6">
    <property type="glycosylation" value="1 site"/>
</dbReference>
<dbReference type="PaxDb" id="3702-AT1G04980.1"/>
<dbReference type="ProteomicsDB" id="236330"/>
<dbReference type="EnsemblPlants" id="AT1G04980.1">
    <property type="protein sequence ID" value="AT1G04980.1"/>
    <property type="gene ID" value="AT1G04980"/>
</dbReference>
<dbReference type="GeneID" id="839355"/>
<dbReference type="Gramene" id="AT1G04980.1">
    <property type="protein sequence ID" value="AT1G04980.1"/>
    <property type="gene ID" value="AT1G04980"/>
</dbReference>
<dbReference type="KEGG" id="ath:AT1G04980"/>
<dbReference type="Araport" id="AT1G04980"/>
<dbReference type="TAIR" id="AT1G04980">
    <property type="gene designation" value="PDIL2-2"/>
</dbReference>
<dbReference type="eggNOG" id="KOG0191">
    <property type="taxonomic scope" value="Eukaryota"/>
</dbReference>
<dbReference type="HOGENOM" id="CLU_030311_1_0_1"/>
<dbReference type="InParanoid" id="Q9MAU6"/>
<dbReference type="OMA" id="KQKLWGW"/>
<dbReference type="PhylomeDB" id="Q9MAU6"/>
<dbReference type="CD-CODE" id="4299E36E">
    <property type="entry name" value="Nucleolus"/>
</dbReference>
<dbReference type="PRO" id="PR:Q9MAU6"/>
<dbReference type="Proteomes" id="UP000006548">
    <property type="component" value="Chromosome 1"/>
</dbReference>
<dbReference type="ExpressionAtlas" id="Q9MAU6">
    <property type="expression patterns" value="baseline and differential"/>
</dbReference>
<dbReference type="GO" id="GO:0005829">
    <property type="term" value="C:cytosol"/>
    <property type="evidence" value="ECO:0000314"/>
    <property type="project" value="TAIR"/>
</dbReference>
<dbReference type="GO" id="GO:0005783">
    <property type="term" value="C:endoplasmic reticulum"/>
    <property type="evidence" value="ECO:0007005"/>
    <property type="project" value="TAIR"/>
</dbReference>
<dbReference type="GO" id="GO:0005788">
    <property type="term" value="C:endoplasmic reticulum lumen"/>
    <property type="evidence" value="ECO:0007669"/>
    <property type="project" value="UniProtKB-SubCell"/>
</dbReference>
<dbReference type="GO" id="GO:0005730">
    <property type="term" value="C:nucleolus"/>
    <property type="evidence" value="ECO:0000314"/>
    <property type="project" value="TAIR"/>
</dbReference>
<dbReference type="GO" id="GO:0005634">
    <property type="term" value="C:nucleus"/>
    <property type="evidence" value="ECO:0000314"/>
    <property type="project" value="TAIR"/>
</dbReference>
<dbReference type="GO" id="GO:0009505">
    <property type="term" value="C:plant-type cell wall"/>
    <property type="evidence" value="ECO:0007005"/>
    <property type="project" value="TAIR"/>
</dbReference>
<dbReference type="GO" id="GO:0003756">
    <property type="term" value="F:protein disulfide isomerase activity"/>
    <property type="evidence" value="ECO:0000250"/>
    <property type="project" value="TAIR"/>
</dbReference>
<dbReference type="GO" id="GO:0034976">
    <property type="term" value="P:response to endoplasmic reticulum stress"/>
    <property type="evidence" value="ECO:0000270"/>
    <property type="project" value="TAIR"/>
</dbReference>
<dbReference type="CDD" id="cd02983">
    <property type="entry name" value="P5_C"/>
    <property type="match status" value="1"/>
</dbReference>
<dbReference type="CDD" id="cd03001">
    <property type="entry name" value="PDI_a_P5"/>
    <property type="match status" value="2"/>
</dbReference>
<dbReference type="FunFam" id="3.40.30.10:FF:000050">
    <property type="entry name" value="protein disulfide-isomerase A6 isoform X1"/>
    <property type="match status" value="2"/>
</dbReference>
<dbReference type="Gene3D" id="3.40.30.10">
    <property type="entry name" value="Glutaredoxin"/>
    <property type="match status" value="3"/>
</dbReference>
<dbReference type="InterPro" id="IPR005788">
    <property type="entry name" value="PDI_thioredoxin-like_dom"/>
</dbReference>
<dbReference type="InterPro" id="IPR036249">
    <property type="entry name" value="Thioredoxin-like_sf"/>
</dbReference>
<dbReference type="InterPro" id="IPR017937">
    <property type="entry name" value="Thioredoxin_CS"/>
</dbReference>
<dbReference type="InterPro" id="IPR013766">
    <property type="entry name" value="Thioredoxin_domain"/>
</dbReference>
<dbReference type="NCBIfam" id="TIGR01126">
    <property type="entry name" value="pdi_dom"/>
    <property type="match status" value="2"/>
</dbReference>
<dbReference type="PANTHER" id="PTHR45815">
    <property type="entry name" value="PROTEIN DISULFIDE-ISOMERASE A6"/>
    <property type="match status" value="1"/>
</dbReference>
<dbReference type="PANTHER" id="PTHR45815:SF7">
    <property type="entry name" value="PROTEIN DISULFIDE-ISOMERASE LIKE 2-2"/>
    <property type="match status" value="1"/>
</dbReference>
<dbReference type="Pfam" id="PF24541">
    <property type="entry name" value="Thioredox_PDIA6_C"/>
    <property type="match status" value="1"/>
</dbReference>
<dbReference type="Pfam" id="PF00085">
    <property type="entry name" value="Thioredoxin"/>
    <property type="match status" value="2"/>
</dbReference>
<dbReference type="PRINTS" id="PR00421">
    <property type="entry name" value="THIOREDOXIN"/>
</dbReference>
<dbReference type="SUPFAM" id="SSF52833">
    <property type="entry name" value="Thioredoxin-like"/>
    <property type="match status" value="3"/>
</dbReference>
<dbReference type="PROSITE" id="PS00194">
    <property type="entry name" value="THIOREDOXIN_1"/>
    <property type="match status" value="2"/>
</dbReference>
<dbReference type="PROSITE" id="PS51352">
    <property type="entry name" value="THIOREDOXIN_2"/>
    <property type="match status" value="2"/>
</dbReference>
<sequence>MERKMYKSTVFPICCLLFALFDRGNALYGSSSPVLQLTPSNFKSKVLNSNGVVLVEFFAPWCGHCQSLTPTWEKVASTLKGIATVAAIDADAHKSVSQDYGVRGFPTIKVFVPGKPPIDYQGARDAKSISQFAIKQIKALLKDRLDGKTSGTKNGGGSSEKKKSEPSASVELNSSNFDELVTESKELWIVEFFAPWCGHCKKLAPEWKKAANNLKGKVKLGHVNCDAEQSIKSRFKVQGFPTILVFGSDKSSPVPYEGARSASAIESFALEQLESNAGPAEVTELTGPDVMEDKCGSAAICFVSFLPDILDSKAEGRNKYLEMLLSVADKFKKDPYGFVWVAAGKQPDLEKRVGVGGYGYPAMVALNAKKGAYAPLKSGFEVKHLKDFVKEAAKGGKGNLPIDGTMEIVKTEAWDGKDGEVVDADEFSLEDLMGNDDEASTESKDDL</sequence>
<keyword id="KW-1015">Disulfide bond</keyword>
<keyword id="KW-0256">Endoplasmic reticulum</keyword>
<keyword id="KW-0325">Glycoprotein</keyword>
<keyword id="KW-0413">Isomerase</keyword>
<keyword id="KW-0676">Redox-active center</keyword>
<keyword id="KW-1185">Reference proteome</keyword>
<keyword id="KW-0677">Repeat</keyword>
<keyword id="KW-0732">Signal</keyword>
<evidence type="ECO:0000250" key="1"/>
<evidence type="ECO:0000255" key="2"/>
<evidence type="ECO:0000255" key="3">
    <source>
        <dbReference type="PROSITE-ProRule" id="PRU00691"/>
    </source>
</evidence>
<evidence type="ECO:0000256" key="4">
    <source>
        <dbReference type="SAM" id="MobiDB-lite"/>
    </source>
</evidence>
<evidence type="ECO:0000269" key="5">
    <source>
    </source>
</evidence>
<evidence type="ECO:0000305" key="6"/>
<accession>Q9MAU6</accession>
<reference key="1">
    <citation type="journal article" date="2000" name="Nature">
        <title>Sequence and analysis of chromosome 1 of the plant Arabidopsis thaliana.</title>
        <authorList>
            <person name="Theologis A."/>
            <person name="Ecker J.R."/>
            <person name="Palm C.J."/>
            <person name="Federspiel N.A."/>
            <person name="Kaul S."/>
            <person name="White O."/>
            <person name="Alonso J."/>
            <person name="Altafi H."/>
            <person name="Araujo R."/>
            <person name="Bowman C.L."/>
            <person name="Brooks S.Y."/>
            <person name="Buehler E."/>
            <person name="Chan A."/>
            <person name="Chao Q."/>
            <person name="Chen H."/>
            <person name="Cheuk R.F."/>
            <person name="Chin C.W."/>
            <person name="Chung M.K."/>
            <person name="Conn L."/>
            <person name="Conway A.B."/>
            <person name="Conway A.R."/>
            <person name="Creasy T.H."/>
            <person name="Dewar K."/>
            <person name="Dunn P."/>
            <person name="Etgu P."/>
            <person name="Feldblyum T.V."/>
            <person name="Feng J.-D."/>
            <person name="Fong B."/>
            <person name="Fujii C.Y."/>
            <person name="Gill J.E."/>
            <person name="Goldsmith A.D."/>
            <person name="Haas B."/>
            <person name="Hansen N.F."/>
            <person name="Hughes B."/>
            <person name="Huizar L."/>
            <person name="Hunter J.L."/>
            <person name="Jenkins J."/>
            <person name="Johnson-Hopson C."/>
            <person name="Khan S."/>
            <person name="Khaykin E."/>
            <person name="Kim C.J."/>
            <person name="Koo H.L."/>
            <person name="Kremenetskaia I."/>
            <person name="Kurtz D.B."/>
            <person name="Kwan A."/>
            <person name="Lam B."/>
            <person name="Langin-Hooper S."/>
            <person name="Lee A."/>
            <person name="Lee J.M."/>
            <person name="Lenz C.A."/>
            <person name="Li J.H."/>
            <person name="Li Y.-P."/>
            <person name="Lin X."/>
            <person name="Liu S.X."/>
            <person name="Liu Z.A."/>
            <person name="Luros J.S."/>
            <person name="Maiti R."/>
            <person name="Marziali A."/>
            <person name="Militscher J."/>
            <person name="Miranda M."/>
            <person name="Nguyen M."/>
            <person name="Nierman W.C."/>
            <person name="Osborne B.I."/>
            <person name="Pai G."/>
            <person name="Peterson J."/>
            <person name="Pham P.K."/>
            <person name="Rizzo M."/>
            <person name="Rooney T."/>
            <person name="Rowley D."/>
            <person name="Sakano H."/>
            <person name="Salzberg S.L."/>
            <person name="Schwartz J.R."/>
            <person name="Shinn P."/>
            <person name="Southwick A.M."/>
            <person name="Sun H."/>
            <person name="Tallon L.J."/>
            <person name="Tambunga G."/>
            <person name="Toriumi M.J."/>
            <person name="Town C.D."/>
            <person name="Utterback T."/>
            <person name="Van Aken S."/>
            <person name="Vaysberg M."/>
            <person name="Vysotskaia V.S."/>
            <person name="Walker M."/>
            <person name="Wu D."/>
            <person name="Yu G."/>
            <person name="Fraser C.M."/>
            <person name="Venter J.C."/>
            <person name="Davis R.W."/>
        </authorList>
    </citation>
    <scope>NUCLEOTIDE SEQUENCE [LARGE SCALE GENOMIC DNA]</scope>
    <source>
        <strain>cv. Columbia</strain>
    </source>
</reference>
<reference key="2">
    <citation type="journal article" date="2017" name="Plant J.">
        <title>Araport11: a complete reannotation of the Arabidopsis thaliana reference genome.</title>
        <authorList>
            <person name="Cheng C.Y."/>
            <person name="Krishnakumar V."/>
            <person name="Chan A.P."/>
            <person name="Thibaud-Nissen F."/>
            <person name="Schobel S."/>
            <person name="Town C.D."/>
        </authorList>
    </citation>
    <scope>GENOME REANNOTATION</scope>
    <source>
        <strain>cv. Columbia</strain>
    </source>
</reference>
<reference key="3">
    <citation type="journal article" date="2003" name="Science">
        <title>Empirical analysis of transcriptional activity in the Arabidopsis genome.</title>
        <authorList>
            <person name="Yamada K."/>
            <person name="Lim J."/>
            <person name="Dale J.M."/>
            <person name="Chen H."/>
            <person name="Shinn P."/>
            <person name="Palm C.J."/>
            <person name="Southwick A.M."/>
            <person name="Wu H.C."/>
            <person name="Kim C.J."/>
            <person name="Nguyen M."/>
            <person name="Pham P.K."/>
            <person name="Cheuk R.F."/>
            <person name="Karlin-Newmann G."/>
            <person name="Liu S.X."/>
            <person name="Lam B."/>
            <person name="Sakano H."/>
            <person name="Wu T."/>
            <person name="Yu G."/>
            <person name="Miranda M."/>
            <person name="Quach H.L."/>
            <person name="Tripp M."/>
            <person name="Chang C.H."/>
            <person name="Lee J.M."/>
            <person name="Toriumi M.J."/>
            <person name="Chan M.M."/>
            <person name="Tang C.C."/>
            <person name="Onodera C.S."/>
            <person name="Deng J.M."/>
            <person name="Akiyama K."/>
            <person name="Ansari Y."/>
            <person name="Arakawa T."/>
            <person name="Banh J."/>
            <person name="Banno F."/>
            <person name="Bowser L."/>
            <person name="Brooks S.Y."/>
            <person name="Carninci P."/>
            <person name="Chao Q."/>
            <person name="Choy N."/>
            <person name="Enju A."/>
            <person name="Goldsmith A.D."/>
            <person name="Gurjal M."/>
            <person name="Hansen N.F."/>
            <person name="Hayashizaki Y."/>
            <person name="Johnson-Hopson C."/>
            <person name="Hsuan V.W."/>
            <person name="Iida K."/>
            <person name="Karnes M."/>
            <person name="Khan S."/>
            <person name="Koesema E."/>
            <person name="Ishida J."/>
            <person name="Jiang P.X."/>
            <person name="Jones T."/>
            <person name="Kawai J."/>
            <person name="Kamiya A."/>
            <person name="Meyers C."/>
            <person name="Nakajima M."/>
            <person name="Narusaka M."/>
            <person name="Seki M."/>
            <person name="Sakurai T."/>
            <person name="Satou M."/>
            <person name="Tamse R."/>
            <person name="Vaysberg M."/>
            <person name="Wallender E.K."/>
            <person name="Wong C."/>
            <person name="Yamamura Y."/>
            <person name="Yuan S."/>
            <person name="Shinozaki K."/>
            <person name="Davis R.W."/>
            <person name="Theologis A."/>
            <person name="Ecker J.R."/>
        </authorList>
    </citation>
    <scope>NUCLEOTIDE SEQUENCE [LARGE SCALE MRNA] OF 5-447</scope>
    <source>
        <strain>cv. Columbia</strain>
    </source>
</reference>
<reference key="4">
    <citation type="journal article" date="2005" name="Plant Physiol.">
        <title>Phylogenetic analyses identify 10 classes of the protein disulfide isomerase family in plants, including single-domain protein disulfide isomerase-related proteins.</title>
        <authorList>
            <person name="Houston N.L."/>
            <person name="Fan C."/>
            <person name="Xiang J.Q."/>
            <person name="Schulze J.M."/>
            <person name="Jung R."/>
            <person name="Boston R.S."/>
        </authorList>
    </citation>
    <scope>GENE FAMILY</scope>
    <scope>NOMENCLATURE</scope>
</reference>
<reference key="5">
    <citation type="journal article" date="2008" name="Mol. Genet. Genomics">
        <title>Endoplasmic reticulum stress activates the expression of a sub-group of protein disulfide isomerase genes and AtbZIP60 modulates the response in Arabidopsis thaliana.</title>
        <authorList>
            <person name="Lu D.-P."/>
            <person name="Christopher D.A."/>
        </authorList>
    </citation>
    <scope>TISSUE SPECIFICITY</scope>
    <scope>INDUCTION</scope>
</reference>
<reference key="6">
    <citation type="journal article" date="2010" name="BMC Plant Biol.">
        <title>The protein disulfide isomerase gene family in bread wheat (T. aestivum L.).</title>
        <authorList>
            <person name="d'Aloisio E."/>
            <person name="Paolacci A.R."/>
            <person name="Dhanapal A.P."/>
            <person name="Tanzarella O.A."/>
            <person name="Porceddu E."/>
            <person name="Ciaffi M."/>
        </authorList>
    </citation>
    <scope>GENE FAMILY</scope>
    <scope>NOMENCLATURE</scope>
</reference>
<gene>
    <name type="primary">PDIL2-2</name>
    <name type="synonym">PDI10</name>
    <name type="synonym">PDIL5-1</name>
    <name type="ordered locus">At1g04980</name>
    <name type="ORF">F13M7.3</name>
</gene>
<feature type="signal peptide" evidence="2">
    <location>
        <begin position="1"/>
        <end position="26"/>
    </location>
</feature>
<feature type="chain" id="PRO_0000400022" description="Protein disulfide-isomerase like 2-2">
    <location>
        <begin position="27"/>
        <end position="447"/>
    </location>
</feature>
<feature type="domain" description="Thioredoxin 1" evidence="3">
    <location>
        <begin position="27"/>
        <end position="139"/>
    </location>
</feature>
<feature type="domain" description="Thioredoxin 2" evidence="3">
    <location>
        <begin position="161"/>
        <end position="275"/>
    </location>
</feature>
<feature type="region of interest" description="Disordered" evidence="4">
    <location>
        <begin position="146"/>
        <end position="170"/>
    </location>
</feature>
<feature type="short sequence motif" description="Prevents secretion from ER" evidence="1">
    <location>
        <begin position="444"/>
        <end position="447"/>
    </location>
</feature>
<feature type="active site" description="Nucleophile" evidence="1">
    <location>
        <position position="62"/>
    </location>
</feature>
<feature type="active site" description="Nucleophile" evidence="1">
    <location>
        <position position="65"/>
    </location>
</feature>
<feature type="active site" description="Nucleophile" evidence="1">
    <location>
        <position position="197"/>
    </location>
</feature>
<feature type="active site" description="Nucleophile" evidence="1">
    <location>
        <position position="200"/>
    </location>
</feature>
<feature type="site" description="Contributes to redox potential value" evidence="1">
    <location>
        <position position="63"/>
    </location>
</feature>
<feature type="site" description="Contributes to redox potential value" evidence="1">
    <location>
        <position position="64"/>
    </location>
</feature>
<feature type="site" description="Lowers pKa of C-terminal Cys of first active site" evidence="1">
    <location>
        <position position="124"/>
    </location>
</feature>
<feature type="site" description="Contributes to redox potential value" evidence="1">
    <location>
        <position position="198"/>
    </location>
</feature>
<feature type="site" description="Contributes to redox potential value" evidence="1">
    <location>
        <position position="199"/>
    </location>
</feature>
<feature type="site" description="Lowers pKa of C-terminal Cys of second active site" evidence="1">
    <location>
        <position position="260"/>
    </location>
</feature>
<feature type="glycosylation site" description="N-linked (GlcNAc...) asparagine" evidence="2">
    <location>
        <position position="173"/>
    </location>
</feature>
<feature type="disulfide bond" description="Redox-active" evidence="3">
    <location>
        <begin position="62"/>
        <end position="65"/>
    </location>
</feature>
<feature type="disulfide bond" description="Redox-active" evidence="3">
    <location>
        <begin position="197"/>
        <end position="200"/>
    </location>
</feature>
<comment type="function">
    <text evidence="1">Acts as a protein-folding catalyst that interacts with nascent polypeptides to catalyze the formation, isomerization, and reduction or oxidation of disulfide bonds.</text>
</comment>
<comment type="catalytic activity">
    <reaction>
        <text>Catalyzes the rearrangement of -S-S- bonds in proteins.</text>
        <dbReference type="EC" id="5.3.4.1"/>
    </reaction>
</comment>
<comment type="subcellular location">
    <subcellularLocation>
        <location evidence="6">Endoplasmic reticulum lumen</location>
    </subcellularLocation>
</comment>
<comment type="tissue specificity">
    <text evidence="5">Widely expressed.</text>
</comment>
<comment type="induction">
    <text evidence="5">By chemically-induced ER stress response.</text>
</comment>
<comment type="similarity">
    <text evidence="6">Belongs to the protein disulfide isomerase family.</text>
</comment>
<comment type="sequence caution" evidence="6">
    <conflict type="erroneous initiation">
        <sequence resource="EMBL-CDS" id="AAF40463"/>
    </conflict>
    <text>Truncated N-terminus.</text>
</comment>